<dbReference type="EC" id="4.1.1.19" evidence="1"/>
<dbReference type="EMBL" id="AE006468">
    <property type="protein sequence ID" value="AAL21961.1"/>
    <property type="molecule type" value="Genomic_DNA"/>
</dbReference>
<dbReference type="RefSeq" id="NP_462002.1">
    <property type="nucleotide sequence ID" value="NC_003197.2"/>
</dbReference>
<dbReference type="RefSeq" id="WP_001278580.1">
    <property type="nucleotide sequence ID" value="NC_003197.2"/>
</dbReference>
<dbReference type="SMR" id="P60659"/>
<dbReference type="STRING" id="99287.STM3086"/>
<dbReference type="PaxDb" id="99287-STM3086"/>
<dbReference type="GeneID" id="1254609"/>
<dbReference type="GeneID" id="44981697"/>
<dbReference type="KEGG" id="stm:STM3086"/>
<dbReference type="PATRIC" id="fig|99287.12.peg.3271"/>
<dbReference type="HOGENOM" id="CLU_027243_1_0_6"/>
<dbReference type="PhylomeDB" id="P60659"/>
<dbReference type="BioCyc" id="SENT99287:STM3086-MONOMER"/>
<dbReference type="UniPathway" id="UPA00186">
    <property type="reaction ID" value="UER00284"/>
</dbReference>
<dbReference type="Proteomes" id="UP000001014">
    <property type="component" value="Chromosome"/>
</dbReference>
<dbReference type="GO" id="GO:0008792">
    <property type="term" value="F:arginine decarboxylase activity"/>
    <property type="evidence" value="ECO:0000318"/>
    <property type="project" value="GO_Central"/>
</dbReference>
<dbReference type="GO" id="GO:0046872">
    <property type="term" value="F:metal ion binding"/>
    <property type="evidence" value="ECO:0007669"/>
    <property type="project" value="UniProtKB-KW"/>
</dbReference>
<dbReference type="GO" id="GO:0006527">
    <property type="term" value="P:arginine catabolic process"/>
    <property type="evidence" value="ECO:0007669"/>
    <property type="project" value="InterPro"/>
</dbReference>
<dbReference type="GO" id="GO:0033388">
    <property type="term" value="P:putrescine biosynthetic process from arginine"/>
    <property type="evidence" value="ECO:0000318"/>
    <property type="project" value="GO_Central"/>
</dbReference>
<dbReference type="GO" id="GO:0008295">
    <property type="term" value="P:spermidine biosynthetic process"/>
    <property type="evidence" value="ECO:0007669"/>
    <property type="project" value="UniProtKB-UniRule"/>
</dbReference>
<dbReference type="CDD" id="cd06830">
    <property type="entry name" value="PLPDE_III_ADC"/>
    <property type="match status" value="1"/>
</dbReference>
<dbReference type="FunFam" id="1.10.287.3440:FF:000001">
    <property type="entry name" value="Biosynthetic arginine decarboxylase"/>
    <property type="match status" value="1"/>
</dbReference>
<dbReference type="FunFam" id="1.20.58.930:FF:000001">
    <property type="entry name" value="Biosynthetic arginine decarboxylase"/>
    <property type="match status" value="1"/>
</dbReference>
<dbReference type="FunFam" id="2.40.37.10:FF:000001">
    <property type="entry name" value="Biosynthetic arginine decarboxylase"/>
    <property type="match status" value="1"/>
</dbReference>
<dbReference type="FunFam" id="3.20.20.10:FF:000001">
    <property type="entry name" value="Biosynthetic arginine decarboxylase"/>
    <property type="match status" value="1"/>
</dbReference>
<dbReference type="Gene3D" id="1.10.287.3440">
    <property type="match status" value="1"/>
</dbReference>
<dbReference type="Gene3D" id="1.20.58.930">
    <property type="match status" value="1"/>
</dbReference>
<dbReference type="Gene3D" id="3.20.20.10">
    <property type="entry name" value="Alanine racemase"/>
    <property type="match status" value="1"/>
</dbReference>
<dbReference type="Gene3D" id="2.40.37.10">
    <property type="entry name" value="Lyase, Ornithine Decarboxylase, Chain A, domain 1"/>
    <property type="match status" value="1"/>
</dbReference>
<dbReference type="HAMAP" id="MF_01417">
    <property type="entry name" value="SpeA"/>
    <property type="match status" value="1"/>
</dbReference>
<dbReference type="InterPro" id="IPR009006">
    <property type="entry name" value="Ala_racemase/Decarboxylase_C"/>
</dbReference>
<dbReference type="InterPro" id="IPR040634">
    <property type="entry name" value="Arg_decarb_HB"/>
</dbReference>
<dbReference type="InterPro" id="IPR041128">
    <property type="entry name" value="Arg_decarbox_C"/>
</dbReference>
<dbReference type="InterPro" id="IPR002985">
    <property type="entry name" value="Arg_decrbxlase"/>
</dbReference>
<dbReference type="InterPro" id="IPR022657">
    <property type="entry name" value="De-COase2_CS"/>
</dbReference>
<dbReference type="InterPro" id="IPR022644">
    <property type="entry name" value="De-COase2_N"/>
</dbReference>
<dbReference type="InterPro" id="IPR022653">
    <property type="entry name" value="De-COase2_pyr-phos_BS"/>
</dbReference>
<dbReference type="InterPro" id="IPR000183">
    <property type="entry name" value="Orn/DAP/Arg_de-COase"/>
</dbReference>
<dbReference type="InterPro" id="IPR029066">
    <property type="entry name" value="PLP-binding_barrel"/>
</dbReference>
<dbReference type="NCBIfam" id="NF003763">
    <property type="entry name" value="PRK05354.1"/>
    <property type="match status" value="1"/>
</dbReference>
<dbReference type="NCBIfam" id="TIGR01273">
    <property type="entry name" value="speA"/>
    <property type="match status" value="1"/>
</dbReference>
<dbReference type="PANTHER" id="PTHR43295">
    <property type="entry name" value="ARGININE DECARBOXYLASE"/>
    <property type="match status" value="1"/>
</dbReference>
<dbReference type="PANTHER" id="PTHR43295:SF9">
    <property type="entry name" value="BIOSYNTHETIC ARGININE DECARBOXYLASE"/>
    <property type="match status" value="1"/>
</dbReference>
<dbReference type="Pfam" id="PF17810">
    <property type="entry name" value="Arg_decarb_HB"/>
    <property type="match status" value="1"/>
</dbReference>
<dbReference type="Pfam" id="PF17944">
    <property type="entry name" value="Arg_decarbox_C"/>
    <property type="match status" value="1"/>
</dbReference>
<dbReference type="Pfam" id="PF02784">
    <property type="entry name" value="Orn_Arg_deC_N"/>
    <property type="match status" value="1"/>
</dbReference>
<dbReference type="PIRSF" id="PIRSF001336">
    <property type="entry name" value="Arg_decrbxlase"/>
    <property type="match status" value="1"/>
</dbReference>
<dbReference type="PRINTS" id="PR01180">
    <property type="entry name" value="ARGDCRBXLASE"/>
</dbReference>
<dbReference type="PRINTS" id="PR01179">
    <property type="entry name" value="ODADCRBXLASE"/>
</dbReference>
<dbReference type="SUPFAM" id="SSF50621">
    <property type="entry name" value="Alanine racemase C-terminal domain-like"/>
    <property type="match status" value="1"/>
</dbReference>
<dbReference type="SUPFAM" id="SSF51419">
    <property type="entry name" value="PLP-binding barrel"/>
    <property type="match status" value="1"/>
</dbReference>
<dbReference type="PROSITE" id="PS00878">
    <property type="entry name" value="ODR_DC_2_1"/>
    <property type="match status" value="1"/>
</dbReference>
<dbReference type="PROSITE" id="PS00879">
    <property type="entry name" value="ODR_DC_2_2"/>
    <property type="match status" value="1"/>
</dbReference>
<name>SPEA_SALTY</name>
<gene>
    <name evidence="1" type="primary">speA</name>
    <name type="ordered locus">STM3086</name>
</gene>
<protein>
    <recommendedName>
        <fullName evidence="1">Biosynthetic arginine decarboxylase</fullName>
        <shortName evidence="1">ADC</shortName>
        <ecNumber evidence="1">4.1.1.19</ecNumber>
    </recommendedName>
</protein>
<keyword id="KW-0210">Decarboxylase</keyword>
<keyword id="KW-0456">Lyase</keyword>
<keyword id="KW-0460">Magnesium</keyword>
<keyword id="KW-0479">Metal-binding</keyword>
<keyword id="KW-0620">Polyamine biosynthesis</keyword>
<keyword id="KW-0661">Putrescine biosynthesis</keyword>
<keyword id="KW-0663">Pyridoxal phosphate</keyword>
<keyword id="KW-1185">Reference proteome</keyword>
<keyword id="KW-0745">Spermidine biosynthesis</keyword>
<proteinExistence type="inferred from homology"/>
<feature type="chain" id="PRO_0000149976" description="Biosynthetic arginine decarboxylase">
    <location>
        <begin position="1"/>
        <end position="658"/>
    </location>
</feature>
<feature type="binding site" evidence="1">
    <location>
        <begin position="307"/>
        <end position="317"/>
    </location>
    <ligand>
        <name>substrate</name>
    </ligand>
</feature>
<feature type="modified residue" description="N6-(pyridoxal phosphate)lysine" evidence="1">
    <location>
        <position position="127"/>
    </location>
</feature>
<accession>P60659</accession>
<accession>Q8XFQ5</accession>
<organism>
    <name type="scientific">Salmonella typhimurium (strain LT2 / SGSC1412 / ATCC 700720)</name>
    <dbReference type="NCBI Taxonomy" id="99287"/>
    <lineage>
        <taxon>Bacteria</taxon>
        <taxon>Pseudomonadati</taxon>
        <taxon>Pseudomonadota</taxon>
        <taxon>Gammaproteobacteria</taxon>
        <taxon>Enterobacterales</taxon>
        <taxon>Enterobacteriaceae</taxon>
        <taxon>Salmonella</taxon>
    </lineage>
</organism>
<sequence length="658" mass="73833">MSDDMSMGSPSSAGEQGVLRSMQEVAMSSQEASKMLRTYNIAWWGNNYYDVNELGHISVCPDPDVPEARVDLAKLVKAREAQGQRLPALFCFPQILQHRLRSINAAFKRARESYGYNGDYFLVYPIKVNQHRRVIESLIHSGEPLGLEAGSKAELMAVLAHAGMTRSVIVCNGYKDREYIRLALIGEKMGHKVYLVIEKMSEIAIVLEEAERLNVVPRLGVRARLASQGSGKWQSSGGEKSKFGLAATQVLQLVETLRDAGRLDSLQLLHFHLGSQMANIRDIATGVRESARFYVELHKLGVNIQCFDVGGGLGVDYEGTRSQSDCSVNYGLNEYANNIIWAIGDACEEHGLPHPTVITESGRAVTAHHTVLVSNIIGVERNEYTDPTAPAEDAPRALQNLWETWQEMHKPGTRRSLREWLHDSQMDLHDIHIGYSSGAFSLQERAWAEQLYLSMCHEVQKQLDPQNRAHRPIIDELQERMADKMYVNFSLFQSMPDAWGIDQLFPVLPLEGLDQVPERRAVLLDITCDSDGAIDHYIDGDGIATTMPMPEYDPENPPMLGFFMVGAYQEILGNMHNLFGDTEAVDVFVFPDGSVEVELSDEGDTVADMLQYVQLDPKTLLTHFRDQVKQTDLDDALQQQFLEEFEAGLYGYTYLEDE</sequence>
<evidence type="ECO:0000255" key="1">
    <source>
        <dbReference type="HAMAP-Rule" id="MF_01417"/>
    </source>
</evidence>
<reference key="1">
    <citation type="journal article" date="2001" name="Nature">
        <title>Complete genome sequence of Salmonella enterica serovar Typhimurium LT2.</title>
        <authorList>
            <person name="McClelland M."/>
            <person name="Sanderson K.E."/>
            <person name="Spieth J."/>
            <person name="Clifton S.W."/>
            <person name="Latreille P."/>
            <person name="Courtney L."/>
            <person name="Porwollik S."/>
            <person name="Ali J."/>
            <person name="Dante M."/>
            <person name="Du F."/>
            <person name="Hou S."/>
            <person name="Layman D."/>
            <person name="Leonard S."/>
            <person name="Nguyen C."/>
            <person name="Scott K."/>
            <person name="Holmes A."/>
            <person name="Grewal N."/>
            <person name="Mulvaney E."/>
            <person name="Ryan E."/>
            <person name="Sun H."/>
            <person name="Florea L."/>
            <person name="Miller W."/>
            <person name="Stoneking T."/>
            <person name="Nhan M."/>
            <person name="Waterston R."/>
            <person name="Wilson R.K."/>
        </authorList>
    </citation>
    <scope>NUCLEOTIDE SEQUENCE [LARGE SCALE GENOMIC DNA]</scope>
    <source>
        <strain>LT2 / SGSC1412 / ATCC 700720</strain>
    </source>
</reference>
<comment type="function">
    <text evidence="1">Catalyzes the biosynthesis of agmatine from arginine.</text>
</comment>
<comment type="catalytic activity">
    <reaction evidence="1">
        <text>L-arginine + H(+) = agmatine + CO2</text>
        <dbReference type="Rhea" id="RHEA:17641"/>
        <dbReference type="ChEBI" id="CHEBI:15378"/>
        <dbReference type="ChEBI" id="CHEBI:16526"/>
        <dbReference type="ChEBI" id="CHEBI:32682"/>
        <dbReference type="ChEBI" id="CHEBI:58145"/>
        <dbReference type="EC" id="4.1.1.19"/>
    </reaction>
</comment>
<comment type="cofactor">
    <cofactor evidence="1">
        <name>Mg(2+)</name>
        <dbReference type="ChEBI" id="CHEBI:18420"/>
    </cofactor>
</comment>
<comment type="cofactor">
    <cofactor evidence="1">
        <name>pyridoxal 5'-phosphate</name>
        <dbReference type="ChEBI" id="CHEBI:597326"/>
    </cofactor>
</comment>
<comment type="pathway">
    <text evidence="1">Amine and polyamine biosynthesis; agmatine biosynthesis; agmatine from L-arginine: step 1/1.</text>
</comment>
<comment type="similarity">
    <text evidence="1">Belongs to the Orn/Lys/Arg decarboxylase class-II family. SpeA subfamily.</text>
</comment>